<gene>
    <name evidence="1" type="primary">ndk</name>
    <name type="ordered locus">Tery_1141</name>
</gene>
<keyword id="KW-0067">ATP-binding</keyword>
<keyword id="KW-0963">Cytoplasm</keyword>
<keyword id="KW-0418">Kinase</keyword>
<keyword id="KW-0460">Magnesium</keyword>
<keyword id="KW-0479">Metal-binding</keyword>
<keyword id="KW-0546">Nucleotide metabolism</keyword>
<keyword id="KW-0547">Nucleotide-binding</keyword>
<keyword id="KW-0597">Phosphoprotein</keyword>
<keyword id="KW-0808">Transferase</keyword>
<proteinExistence type="inferred from homology"/>
<organism>
    <name type="scientific">Trichodesmium erythraeum (strain IMS101)</name>
    <dbReference type="NCBI Taxonomy" id="203124"/>
    <lineage>
        <taxon>Bacteria</taxon>
        <taxon>Bacillati</taxon>
        <taxon>Cyanobacteriota</taxon>
        <taxon>Cyanophyceae</taxon>
        <taxon>Oscillatoriophycideae</taxon>
        <taxon>Oscillatoriales</taxon>
        <taxon>Microcoleaceae</taxon>
        <taxon>Trichodesmium</taxon>
    </lineage>
</organism>
<feature type="chain" id="PRO_0000267808" description="Nucleoside diphosphate kinase">
    <location>
        <begin position="1"/>
        <end position="149"/>
    </location>
</feature>
<feature type="active site" description="Pros-phosphohistidine intermediate" evidence="1">
    <location>
        <position position="115"/>
    </location>
</feature>
<feature type="binding site" evidence="1">
    <location>
        <position position="9"/>
    </location>
    <ligand>
        <name>ATP</name>
        <dbReference type="ChEBI" id="CHEBI:30616"/>
    </ligand>
</feature>
<feature type="binding site" evidence="1">
    <location>
        <position position="57"/>
    </location>
    <ligand>
        <name>ATP</name>
        <dbReference type="ChEBI" id="CHEBI:30616"/>
    </ligand>
</feature>
<feature type="binding site" evidence="1">
    <location>
        <position position="85"/>
    </location>
    <ligand>
        <name>ATP</name>
        <dbReference type="ChEBI" id="CHEBI:30616"/>
    </ligand>
</feature>
<feature type="binding site" evidence="1">
    <location>
        <position position="91"/>
    </location>
    <ligand>
        <name>ATP</name>
        <dbReference type="ChEBI" id="CHEBI:30616"/>
    </ligand>
</feature>
<feature type="binding site" evidence="1">
    <location>
        <position position="102"/>
    </location>
    <ligand>
        <name>ATP</name>
        <dbReference type="ChEBI" id="CHEBI:30616"/>
    </ligand>
</feature>
<feature type="binding site" evidence="1">
    <location>
        <position position="112"/>
    </location>
    <ligand>
        <name>ATP</name>
        <dbReference type="ChEBI" id="CHEBI:30616"/>
    </ligand>
</feature>
<reference key="1">
    <citation type="journal article" date="2015" name="Proc. Natl. Acad. Sci. U.S.A.">
        <title>Trichodesmium genome maintains abundant, widespread noncoding DNA in situ, despite oligotrophic lifestyle.</title>
        <authorList>
            <person name="Walworth N."/>
            <person name="Pfreundt U."/>
            <person name="Nelson W.C."/>
            <person name="Mincer T."/>
            <person name="Heidelberg J.F."/>
            <person name="Fu F."/>
            <person name="Waterbury J.B."/>
            <person name="Glavina del Rio T."/>
            <person name="Goodwin L."/>
            <person name="Kyrpides N.C."/>
            <person name="Land M.L."/>
            <person name="Woyke T."/>
            <person name="Hutchins D.A."/>
            <person name="Hess W.R."/>
            <person name="Webb E.A."/>
        </authorList>
    </citation>
    <scope>NUCLEOTIDE SEQUENCE [LARGE SCALE GENOMIC DNA]</scope>
    <source>
        <strain>IMS101</strain>
    </source>
</reference>
<name>NDK_TRIEI</name>
<evidence type="ECO:0000255" key="1">
    <source>
        <dbReference type="HAMAP-Rule" id="MF_00451"/>
    </source>
</evidence>
<comment type="function">
    <text evidence="1">Major role in the synthesis of nucleoside triphosphates other than ATP. The ATP gamma phosphate is transferred to the NDP beta phosphate via a ping-pong mechanism, using a phosphorylated active-site intermediate.</text>
</comment>
<comment type="catalytic activity">
    <reaction evidence="1">
        <text>a 2'-deoxyribonucleoside 5'-diphosphate + ATP = a 2'-deoxyribonucleoside 5'-triphosphate + ADP</text>
        <dbReference type="Rhea" id="RHEA:44640"/>
        <dbReference type="ChEBI" id="CHEBI:30616"/>
        <dbReference type="ChEBI" id="CHEBI:61560"/>
        <dbReference type="ChEBI" id="CHEBI:73316"/>
        <dbReference type="ChEBI" id="CHEBI:456216"/>
        <dbReference type="EC" id="2.7.4.6"/>
    </reaction>
</comment>
<comment type="catalytic activity">
    <reaction evidence="1">
        <text>a ribonucleoside 5'-diphosphate + ATP = a ribonucleoside 5'-triphosphate + ADP</text>
        <dbReference type="Rhea" id="RHEA:18113"/>
        <dbReference type="ChEBI" id="CHEBI:30616"/>
        <dbReference type="ChEBI" id="CHEBI:57930"/>
        <dbReference type="ChEBI" id="CHEBI:61557"/>
        <dbReference type="ChEBI" id="CHEBI:456216"/>
        <dbReference type="EC" id="2.7.4.6"/>
    </reaction>
</comment>
<comment type="cofactor">
    <cofactor evidence="1">
        <name>Mg(2+)</name>
        <dbReference type="ChEBI" id="CHEBI:18420"/>
    </cofactor>
</comment>
<comment type="subunit">
    <text evidence="1">Homotetramer.</text>
</comment>
<comment type="subcellular location">
    <subcellularLocation>
        <location evidence="1">Cytoplasm</location>
    </subcellularLocation>
</comment>
<comment type="similarity">
    <text evidence="1">Belongs to the NDK family.</text>
</comment>
<protein>
    <recommendedName>
        <fullName evidence="1">Nucleoside diphosphate kinase</fullName>
        <shortName evidence="1">NDK</shortName>
        <shortName evidence="1">NDP kinase</shortName>
        <ecNumber evidence="1">2.7.4.6</ecNumber>
    </recommendedName>
    <alternativeName>
        <fullName evidence="1">Nucleoside-2-P kinase</fullName>
    </alternativeName>
</protein>
<sequence>MERTFIAIKPDGVQRGLVGQIISRFETKGFTLVGLKIMTVTKELAEKHYDVHKERPFFSSLIEFIKSGPLVAMVWEGEGVVASARKIIGATNPLTAEPGTIRGDYGISLGRNLIHGSDAIETAQTEINLWFKEEELVSWKPTLTSWIVE</sequence>
<dbReference type="EC" id="2.7.4.6" evidence="1"/>
<dbReference type="EMBL" id="CP000393">
    <property type="protein sequence ID" value="ABG50503.1"/>
    <property type="molecule type" value="Genomic_DNA"/>
</dbReference>
<dbReference type="RefSeq" id="WP_011610889.1">
    <property type="nucleotide sequence ID" value="NC_008312.1"/>
</dbReference>
<dbReference type="SMR" id="Q116S1"/>
<dbReference type="STRING" id="203124.Tery_1141"/>
<dbReference type="KEGG" id="ter:Tery_1141"/>
<dbReference type="eggNOG" id="COG0105">
    <property type="taxonomic scope" value="Bacteria"/>
</dbReference>
<dbReference type="HOGENOM" id="CLU_060216_6_3_3"/>
<dbReference type="OrthoDB" id="9801161at2"/>
<dbReference type="GO" id="GO:0005737">
    <property type="term" value="C:cytoplasm"/>
    <property type="evidence" value="ECO:0007669"/>
    <property type="project" value="UniProtKB-SubCell"/>
</dbReference>
<dbReference type="GO" id="GO:0005524">
    <property type="term" value="F:ATP binding"/>
    <property type="evidence" value="ECO:0007669"/>
    <property type="project" value="UniProtKB-UniRule"/>
</dbReference>
<dbReference type="GO" id="GO:0046872">
    <property type="term" value="F:metal ion binding"/>
    <property type="evidence" value="ECO:0007669"/>
    <property type="project" value="UniProtKB-KW"/>
</dbReference>
<dbReference type="GO" id="GO:0004550">
    <property type="term" value="F:nucleoside diphosphate kinase activity"/>
    <property type="evidence" value="ECO:0007669"/>
    <property type="project" value="UniProtKB-UniRule"/>
</dbReference>
<dbReference type="GO" id="GO:0006241">
    <property type="term" value="P:CTP biosynthetic process"/>
    <property type="evidence" value="ECO:0007669"/>
    <property type="project" value="UniProtKB-UniRule"/>
</dbReference>
<dbReference type="GO" id="GO:0006183">
    <property type="term" value="P:GTP biosynthetic process"/>
    <property type="evidence" value="ECO:0007669"/>
    <property type="project" value="UniProtKB-UniRule"/>
</dbReference>
<dbReference type="GO" id="GO:0006228">
    <property type="term" value="P:UTP biosynthetic process"/>
    <property type="evidence" value="ECO:0007669"/>
    <property type="project" value="UniProtKB-UniRule"/>
</dbReference>
<dbReference type="CDD" id="cd04413">
    <property type="entry name" value="NDPk_I"/>
    <property type="match status" value="1"/>
</dbReference>
<dbReference type="FunFam" id="3.30.70.141:FF:000002">
    <property type="entry name" value="Nucleoside diphosphate kinase"/>
    <property type="match status" value="1"/>
</dbReference>
<dbReference type="Gene3D" id="3.30.70.141">
    <property type="entry name" value="Nucleoside diphosphate kinase-like domain"/>
    <property type="match status" value="1"/>
</dbReference>
<dbReference type="HAMAP" id="MF_00451">
    <property type="entry name" value="NDP_kinase"/>
    <property type="match status" value="1"/>
</dbReference>
<dbReference type="InterPro" id="IPR034907">
    <property type="entry name" value="NDK-like_dom"/>
</dbReference>
<dbReference type="InterPro" id="IPR036850">
    <property type="entry name" value="NDK-like_dom_sf"/>
</dbReference>
<dbReference type="InterPro" id="IPR001564">
    <property type="entry name" value="Nucleoside_diP_kinase"/>
</dbReference>
<dbReference type="InterPro" id="IPR023005">
    <property type="entry name" value="Nucleoside_diP_kinase_AS"/>
</dbReference>
<dbReference type="NCBIfam" id="NF001908">
    <property type="entry name" value="PRK00668.1"/>
    <property type="match status" value="1"/>
</dbReference>
<dbReference type="PANTHER" id="PTHR11349">
    <property type="entry name" value="NUCLEOSIDE DIPHOSPHATE KINASE"/>
    <property type="match status" value="1"/>
</dbReference>
<dbReference type="Pfam" id="PF00334">
    <property type="entry name" value="NDK"/>
    <property type="match status" value="1"/>
</dbReference>
<dbReference type="PRINTS" id="PR01243">
    <property type="entry name" value="NUCDPKINASE"/>
</dbReference>
<dbReference type="SMART" id="SM00562">
    <property type="entry name" value="NDK"/>
    <property type="match status" value="1"/>
</dbReference>
<dbReference type="SUPFAM" id="SSF54919">
    <property type="entry name" value="Nucleoside diphosphate kinase, NDK"/>
    <property type="match status" value="1"/>
</dbReference>
<dbReference type="PROSITE" id="PS00469">
    <property type="entry name" value="NDPK"/>
    <property type="match status" value="1"/>
</dbReference>
<dbReference type="PROSITE" id="PS51374">
    <property type="entry name" value="NDPK_LIKE"/>
    <property type="match status" value="1"/>
</dbReference>
<accession>Q116S1</accession>